<organism>
    <name type="scientific">Nocardia farcinica (strain IFM 10152)</name>
    <dbReference type="NCBI Taxonomy" id="247156"/>
    <lineage>
        <taxon>Bacteria</taxon>
        <taxon>Bacillati</taxon>
        <taxon>Actinomycetota</taxon>
        <taxon>Actinomycetes</taxon>
        <taxon>Mycobacteriales</taxon>
        <taxon>Nocardiaceae</taxon>
        <taxon>Nocardia</taxon>
    </lineage>
</organism>
<gene>
    <name evidence="1" type="primary">gluQ</name>
    <name type="ordered locus">NFA_2690</name>
</gene>
<keyword id="KW-0030">Aminoacyl-tRNA synthetase</keyword>
<keyword id="KW-0067">ATP-binding</keyword>
<keyword id="KW-0436">Ligase</keyword>
<keyword id="KW-0479">Metal-binding</keyword>
<keyword id="KW-0547">Nucleotide-binding</keyword>
<keyword id="KW-1185">Reference proteome</keyword>
<keyword id="KW-0862">Zinc</keyword>
<protein>
    <recommendedName>
        <fullName evidence="1">Glutamyl-Q tRNA(Asp) synthetase</fullName>
        <shortName evidence="1">Glu-Q-RSs</shortName>
        <ecNumber evidence="1">6.1.1.-</ecNumber>
    </recommendedName>
</protein>
<name>GLUQ_NOCFA</name>
<feature type="chain" id="PRO_0000208309" description="Glutamyl-Q tRNA(Asp) synthetase">
    <location>
        <begin position="1"/>
        <end position="311"/>
    </location>
</feature>
<feature type="short sequence motif" description="'HIGH' region">
    <location>
        <begin position="17"/>
        <end position="27"/>
    </location>
</feature>
<feature type="short sequence motif" description="'KMSKS' region">
    <location>
        <begin position="242"/>
        <end position="246"/>
    </location>
</feature>
<feature type="binding site" evidence="1">
    <location>
        <begin position="14"/>
        <end position="18"/>
    </location>
    <ligand>
        <name>L-glutamate</name>
        <dbReference type="ChEBI" id="CHEBI:29985"/>
    </ligand>
</feature>
<feature type="binding site" evidence="1">
    <location>
        <position position="50"/>
    </location>
    <ligand>
        <name>L-glutamate</name>
        <dbReference type="ChEBI" id="CHEBI:29985"/>
    </ligand>
</feature>
<feature type="binding site" evidence="1">
    <location>
        <position position="104"/>
    </location>
    <ligand>
        <name>Zn(2+)</name>
        <dbReference type="ChEBI" id="CHEBI:29105"/>
    </ligand>
</feature>
<feature type="binding site" evidence="1">
    <location>
        <position position="106"/>
    </location>
    <ligand>
        <name>Zn(2+)</name>
        <dbReference type="ChEBI" id="CHEBI:29105"/>
    </ligand>
</feature>
<feature type="binding site" evidence="1">
    <location>
        <position position="125"/>
    </location>
    <ligand>
        <name>Zn(2+)</name>
        <dbReference type="ChEBI" id="CHEBI:29105"/>
    </ligand>
</feature>
<feature type="binding site" evidence="1">
    <location>
        <position position="129"/>
    </location>
    <ligand>
        <name>Zn(2+)</name>
        <dbReference type="ChEBI" id="CHEBI:29105"/>
    </ligand>
</feature>
<feature type="binding site" evidence="1">
    <location>
        <position position="186"/>
    </location>
    <ligand>
        <name>L-glutamate</name>
        <dbReference type="ChEBI" id="CHEBI:29985"/>
    </ligand>
</feature>
<feature type="binding site" evidence="1">
    <location>
        <position position="204"/>
    </location>
    <ligand>
        <name>L-glutamate</name>
        <dbReference type="ChEBI" id="CHEBI:29985"/>
    </ligand>
</feature>
<feature type="binding site" evidence="1">
    <location>
        <position position="245"/>
    </location>
    <ligand>
        <name>ATP</name>
        <dbReference type="ChEBI" id="CHEBI:30616"/>
    </ligand>
</feature>
<evidence type="ECO:0000255" key="1">
    <source>
        <dbReference type="HAMAP-Rule" id="MF_01428"/>
    </source>
</evidence>
<proteinExistence type="inferred from homology"/>
<comment type="function">
    <text evidence="1">Catalyzes the tRNA-independent activation of glutamate in presence of ATP and the subsequent transfer of glutamate onto a tRNA(Asp). Glutamate is transferred on the 2-amino-5-(4,5-dihydroxy-2-cyclopenten-1-yl) moiety of the queuosine in the wobble position of the QUC anticodon.</text>
</comment>
<comment type="cofactor">
    <cofactor evidence="1">
        <name>Zn(2+)</name>
        <dbReference type="ChEBI" id="CHEBI:29105"/>
    </cofactor>
    <text evidence="1">Binds 1 zinc ion per subunit.</text>
</comment>
<comment type="similarity">
    <text evidence="1">Belongs to the class-I aminoacyl-tRNA synthetase family. GluQ subfamily.</text>
</comment>
<sequence>MADVQAPTIGGAGRYAPSPSGDLHLGNLRTALLAWLFARASGRRFLLRVEDLDRVRPGAQQRQLADLRAIGLDWDGPVVCQSQRRTRYEAAITRLREAGLTYECYCTRREIQQAATAPHGPLGAYPGTCRDLSDADRAERRAQGRPAALRLRAERTDFEIVDQLHGRYRGPVDDVVLRRGDGLPAYNLAVVVDDAAQGVDQVVRGDDLLPSTPRQAYLATLLGLPVPAYAHVPLVLNKDGQRLAKRDGAVTLADQQRAGKSPEQVLALLTDSLGLPPRPPRELLADFDPARLPREPWILTDNGLLQPSECP</sequence>
<accession>Q5Z380</accession>
<reference key="1">
    <citation type="journal article" date="2004" name="Proc. Natl. Acad. Sci. U.S.A.">
        <title>The complete genomic sequence of Nocardia farcinica IFM 10152.</title>
        <authorList>
            <person name="Ishikawa J."/>
            <person name="Yamashita A."/>
            <person name="Mikami Y."/>
            <person name="Hoshino Y."/>
            <person name="Kurita H."/>
            <person name="Hotta K."/>
            <person name="Shiba T."/>
            <person name="Hattori M."/>
        </authorList>
    </citation>
    <scope>NUCLEOTIDE SEQUENCE [LARGE SCALE GENOMIC DNA]</scope>
    <source>
        <strain>IFM 10152</strain>
    </source>
</reference>
<dbReference type="EC" id="6.1.1.-" evidence="1"/>
<dbReference type="EMBL" id="AP006618">
    <property type="protein sequence ID" value="BAD55111.1"/>
    <property type="molecule type" value="Genomic_DNA"/>
</dbReference>
<dbReference type="RefSeq" id="WP_011206798.1">
    <property type="nucleotide sequence ID" value="NC_006361.1"/>
</dbReference>
<dbReference type="SMR" id="Q5Z380"/>
<dbReference type="STRING" id="247156.NFA_2690"/>
<dbReference type="GeneID" id="61131112"/>
<dbReference type="KEGG" id="nfa:NFA_2690"/>
<dbReference type="eggNOG" id="COG0008">
    <property type="taxonomic scope" value="Bacteria"/>
</dbReference>
<dbReference type="HOGENOM" id="CLU_015768_0_0_11"/>
<dbReference type="OrthoDB" id="9807503at2"/>
<dbReference type="Proteomes" id="UP000006820">
    <property type="component" value="Chromosome"/>
</dbReference>
<dbReference type="GO" id="GO:0005829">
    <property type="term" value="C:cytosol"/>
    <property type="evidence" value="ECO:0007669"/>
    <property type="project" value="TreeGrafter"/>
</dbReference>
<dbReference type="GO" id="GO:0005524">
    <property type="term" value="F:ATP binding"/>
    <property type="evidence" value="ECO:0007669"/>
    <property type="project" value="UniProtKB-KW"/>
</dbReference>
<dbReference type="GO" id="GO:0004818">
    <property type="term" value="F:glutamate-tRNA ligase activity"/>
    <property type="evidence" value="ECO:0007669"/>
    <property type="project" value="TreeGrafter"/>
</dbReference>
<dbReference type="GO" id="GO:0008270">
    <property type="term" value="F:zinc ion binding"/>
    <property type="evidence" value="ECO:0007669"/>
    <property type="project" value="UniProtKB-UniRule"/>
</dbReference>
<dbReference type="GO" id="GO:0006424">
    <property type="term" value="P:glutamyl-tRNA aminoacylation"/>
    <property type="evidence" value="ECO:0007669"/>
    <property type="project" value="InterPro"/>
</dbReference>
<dbReference type="GO" id="GO:0006400">
    <property type="term" value="P:tRNA modification"/>
    <property type="evidence" value="ECO:0007669"/>
    <property type="project" value="InterPro"/>
</dbReference>
<dbReference type="Gene3D" id="3.40.50.620">
    <property type="entry name" value="HUPs"/>
    <property type="match status" value="1"/>
</dbReference>
<dbReference type="HAMAP" id="MF_01428">
    <property type="entry name" value="Glu_Q_tRNA_synth"/>
    <property type="match status" value="1"/>
</dbReference>
<dbReference type="InterPro" id="IPR001412">
    <property type="entry name" value="aa-tRNA-synth_I_CS"/>
</dbReference>
<dbReference type="InterPro" id="IPR022380">
    <property type="entry name" value="Glu-Q_tRNA(Asp)_Synthase"/>
</dbReference>
<dbReference type="InterPro" id="IPR000924">
    <property type="entry name" value="Glu/Gln-tRNA-synth"/>
</dbReference>
<dbReference type="InterPro" id="IPR020058">
    <property type="entry name" value="Glu/Gln-tRNA-synth_Ib_cat-dom"/>
</dbReference>
<dbReference type="InterPro" id="IPR049940">
    <property type="entry name" value="GluQ/Sye"/>
</dbReference>
<dbReference type="InterPro" id="IPR014729">
    <property type="entry name" value="Rossmann-like_a/b/a_fold"/>
</dbReference>
<dbReference type="NCBIfam" id="NF004314">
    <property type="entry name" value="PRK05710.1-3"/>
    <property type="match status" value="1"/>
</dbReference>
<dbReference type="NCBIfam" id="NF004315">
    <property type="entry name" value="PRK05710.1-4"/>
    <property type="match status" value="1"/>
</dbReference>
<dbReference type="NCBIfam" id="TIGR03838">
    <property type="entry name" value="queuosine_YadB"/>
    <property type="match status" value="1"/>
</dbReference>
<dbReference type="PANTHER" id="PTHR43311">
    <property type="entry name" value="GLUTAMATE--TRNA LIGASE"/>
    <property type="match status" value="1"/>
</dbReference>
<dbReference type="PANTHER" id="PTHR43311:SF1">
    <property type="entry name" value="GLUTAMYL-Q TRNA(ASP) SYNTHETASE"/>
    <property type="match status" value="1"/>
</dbReference>
<dbReference type="Pfam" id="PF00749">
    <property type="entry name" value="tRNA-synt_1c"/>
    <property type="match status" value="1"/>
</dbReference>
<dbReference type="PRINTS" id="PR00987">
    <property type="entry name" value="TRNASYNTHGLU"/>
</dbReference>
<dbReference type="SUPFAM" id="SSF52374">
    <property type="entry name" value="Nucleotidylyl transferase"/>
    <property type="match status" value="1"/>
</dbReference>
<dbReference type="PROSITE" id="PS00178">
    <property type="entry name" value="AA_TRNA_LIGASE_I"/>
    <property type="match status" value="1"/>
</dbReference>